<gene>
    <name type="ORF">VDBG_00178</name>
</gene>
<keyword id="KW-0012">Acyltransferase</keyword>
<keyword id="KW-0028">Amino-acid biosynthesis</keyword>
<keyword id="KW-0055">Arginine biosynthesis</keyword>
<keyword id="KW-0068">Autocatalytic cleavage</keyword>
<keyword id="KW-0496">Mitochondrion</keyword>
<keyword id="KW-0511">Multifunctional enzyme</keyword>
<keyword id="KW-1185">Reference proteome</keyword>
<keyword id="KW-0808">Transferase</keyword>
<keyword id="KW-0809">Transit peptide</keyword>
<reference key="1">
    <citation type="journal article" date="2011" name="PLoS Pathog.">
        <title>Comparative genomics yields insights into niche adaptation of plant vascular wilt pathogens.</title>
        <authorList>
            <person name="Klosterman S.J."/>
            <person name="Subbarao K.V."/>
            <person name="Kang S."/>
            <person name="Veronese P."/>
            <person name="Gold S.E."/>
            <person name="Thomma B.P.H.J."/>
            <person name="Chen Z."/>
            <person name="Henrissat B."/>
            <person name="Lee Y.-H."/>
            <person name="Park J."/>
            <person name="Garcia-Pedrajas M.D."/>
            <person name="Barbara D.J."/>
            <person name="Anchieta A."/>
            <person name="de Jonge R."/>
            <person name="Santhanam P."/>
            <person name="Maruthachalam K."/>
            <person name="Atallah Z."/>
            <person name="Amyotte S.G."/>
            <person name="Paz Z."/>
            <person name="Inderbitzin P."/>
            <person name="Hayes R.J."/>
            <person name="Heiman D.I."/>
            <person name="Young S."/>
            <person name="Zeng Q."/>
            <person name="Engels R."/>
            <person name="Galagan J."/>
            <person name="Cuomo C.A."/>
            <person name="Dobinson K.F."/>
            <person name="Ma L.-J."/>
        </authorList>
    </citation>
    <scope>NUCLEOTIDE SEQUENCE [LARGE SCALE GENOMIC DNA]</scope>
    <source>
        <strain>VaMs.102 / ATCC MYA-4576 / FGSC 10136</strain>
    </source>
</reference>
<accession>C9S923</accession>
<name>ARGJ_VERA1</name>
<dbReference type="EC" id="2.3.1.35" evidence="1"/>
<dbReference type="EC" id="2.3.1.1" evidence="1"/>
<dbReference type="EMBL" id="DS985214">
    <property type="protein sequence ID" value="EEY14071.1"/>
    <property type="molecule type" value="Genomic_DNA"/>
</dbReference>
<dbReference type="RefSeq" id="XP_003008497.1">
    <property type="nucleotide sequence ID" value="XM_003008451.1"/>
</dbReference>
<dbReference type="SMR" id="C9S923"/>
<dbReference type="STRING" id="526221.C9S923"/>
<dbReference type="MEROPS" id="T05.001"/>
<dbReference type="GeneID" id="9528604"/>
<dbReference type="KEGG" id="val:VDBG_00178"/>
<dbReference type="eggNOG" id="KOG2786">
    <property type="taxonomic scope" value="Eukaryota"/>
</dbReference>
<dbReference type="HOGENOM" id="CLU_027172_1_0_1"/>
<dbReference type="OMA" id="WGRIVMA"/>
<dbReference type="OrthoDB" id="4199794at2759"/>
<dbReference type="UniPathway" id="UPA00068">
    <property type="reaction ID" value="UER00106"/>
</dbReference>
<dbReference type="UniPathway" id="UPA00068">
    <property type="reaction ID" value="UER00111"/>
</dbReference>
<dbReference type="Proteomes" id="UP000008698">
    <property type="component" value="Unassembled WGS sequence"/>
</dbReference>
<dbReference type="GO" id="GO:0005759">
    <property type="term" value="C:mitochondrial matrix"/>
    <property type="evidence" value="ECO:0007669"/>
    <property type="project" value="UniProtKB-SubCell"/>
</dbReference>
<dbReference type="GO" id="GO:0004358">
    <property type="term" value="F:glutamate N-acetyltransferase activity"/>
    <property type="evidence" value="ECO:0007669"/>
    <property type="project" value="UniProtKB-UniRule"/>
</dbReference>
<dbReference type="GO" id="GO:0004042">
    <property type="term" value="F:L-glutamate N-acetyltransferase activity"/>
    <property type="evidence" value="ECO:0007669"/>
    <property type="project" value="UniProtKB-UniRule"/>
</dbReference>
<dbReference type="GO" id="GO:0006526">
    <property type="term" value="P:L-arginine biosynthetic process"/>
    <property type="evidence" value="ECO:0007669"/>
    <property type="project" value="UniProtKB-UniRule"/>
</dbReference>
<dbReference type="GO" id="GO:0006592">
    <property type="term" value="P:ornithine biosynthetic process"/>
    <property type="evidence" value="ECO:0007669"/>
    <property type="project" value="TreeGrafter"/>
</dbReference>
<dbReference type="CDD" id="cd02152">
    <property type="entry name" value="OAT"/>
    <property type="match status" value="1"/>
</dbReference>
<dbReference type="FunFam" id="3.60.70.12:FF:000001">
    <property type="entry name" value="Arginine biosynthesis bifunctional protein ArgJ, chloroplastic"/>
    <property type="match status" value="1"/>
</dbReference>
<dbReference type="FunFam" id="3.10.20.340:FF:000002">
    <property type="entry name" value="Arginine biosynthesis bifunctional protein ArgJ, mitochondrial"/>
    <property type="match status" value="1"/>
</dbReference>
<dbReference type="FunFam" id="3.30.2330.10:FF:000001">
    <property type="entry name" value="Arginine biosynthesis bifunctional protein ArgJ, mitochondrial"/>
    <property type="match status" value="1"/>
</dbReference>
<dbReference type="Gene3D" id="3.30.2330.10">
    <property type="entry name" value="arginine biosynthesis bifunctional protein suprefamily"/>
    <property type="match status" value="1"/>
</dbReference>
<dbReference type="Gene3D" id="3.10.20.340">
    <property type="entry name" value="ArgJ beta chain, C-terminal domain"/>
    <property type="match status" value="1"/>
</dbReference>
<dbReference type="Gene3D" id="3.60.70.12">
    <property type="entry name" value="L-amino peptidase D-ALA esterase/amidase"/>
    <property type="match status" value="1"/>
</dbReference>
<dbReference type="HAMAP" id="MF_01106">
    <property type="entry name" value="ArgJ"/>
    <property type="match status" value="1"/>
</dbReference>
<dbReference type="InterPro" id="IPR002813">
    <property type="entry name" value="Arg_biosynth_ArgJ"/>
</dbReference>
<dbReference type="InterPro" id="IPR016117">
    <property type="entry name" value="ArgJ-like_dom_sf"/>
</dbReference>
<dbReference type="InterPro" id="IPR042195">
    <property type="entry name" value="ArgJ_beta_C"/>
</dbReference>
<dbReference type="NCBIfam" id="TIGR00120">
    <property type="entry name" value="ArgJ"/>
    <property type="match status" value="1"/>
</dbReference>
<dbReference type="NCBIfam" id="NF003802">
    <property type="entry name" value="PRK05388.1"/>
    <property type="match status" value="1"/>
</dbReference>
<dbReference type="PANTHER" id="PTHR23100">
    <property type="entry name" value="ARGININE BIOSYNTHESIS BIFUNCTIONAL PROTEIN ARGJ"/>
    <property type="match status" value="1"/>
</dbReference>
<dbReference type="PANTHER" id="PTHR23100:SF0">
    <property type="entry name" value="ARGININE BIOSYNTHESIS BIFUNCTIONAL PROTEIN ARGJ, MITOCHONDRIAL"/>
    <property type="match status" value="1"/>
</dbReference>
<dbReference type="Pfam" id="PF01960">
    <property type="entry name" value="ArgJ"/>
    <property type="match status" value="1"/>
</dbReference>
<dbReference type="SUPFAM" id="SSF56266">
    <property type="entry name" value="DmpA/ArgJ-like"/>
    <property type="match status" value="1"/>
</dbReference>
<comment type="function">
    <text evidence="1">Catalyzes two activities which are involved in the cyclic version of arginine biosynthesis: the synthesis of acetylglutamate from glutamate and acetyl-CoA, and of ornithine by transacetylation between acetylornithine and glutamate.</text>
</comment>
<comment type="catalytic activity">
    <reaction evidence="1">
        <text>N(2)-acetyl-L-ornithine + L-glutamate = N-acetyl-L-glutamate + L-ornithine</text>
        <dbReference type="Rhea" id="RHEA:15349"/>
        <dbReference type="ChEBI" id="CHEBI:29985"/>
        <dbReference type="ChEBI" id="CHEBI:44337"/>
        <dbReference type="ChEBI" id="CHEBI:46911"/>
        <dbReference type="ChEBI" id="CHEBI:57805"/>
        <dbReference type="EC" id="2.3.1.35"/>
    </reaction>
</comment>
<comment type="catalytic activity">
    <reaction evidence="1">
        <text>L-glutamate + acetyl-CoA = N-acetyl-L-glutamate + CoA + H(+)</text>
        <dbReference type="Rhea" id="RHEA:24292"/>
        <dbReference type="ChEBI" id="CHEBI:15378"/>
        <dbReference type="ChEBI" id="CHEBI:29985"/>
        <dbReference type="ChEBI" id="CHEBI:44337"/>
        <dbReference type="ChEBI" id="CHEBI:57287"/>
        <dbReference type="ChEBI" id="CHEBI:57288"/>
        <dbReference type="EC" id="2.3.1.1"/>
    </reaction>
</comment>
<comment type="pathway">
    <text evidence="1">Amino-acid biosynthesis; L-arginine biosynthesis; L-ornithine and N-acetyl-L-glutamate from L-glutamate and N(2)-acetyl-L-ornithine (cyclic): step 1/1.</text>
</comment>
<comment type="pathway">
    <text evidence="1">Amino-acid biosynthesis; L-arginine biosynthesis; N(2)-acetyl-L-ornithine from L-glutamate: step 1/4.</text>
</comment>
<comment type="subunit">
    <text evidence="1">Heterodimer of an alpha and a beta chain.</text>
</comment>
<comment type="subcellular location">
    <subcellularLocation>
        <location evidence="1">Mitochondrion matrix</location>
    </subcellularLocation>
</comment>
<comment type="PTM">
    <text evidence="1">The alpha and beta chains are autoproteolytically processed from a single precursor protein within the mitochondrion.</text>
</comment>
<comment type="similarity">
    <text evidence="1">Belongs to the ArgJ family.</text>
</comment>
<proteinExistence type="inferred from homology"/>
<feature type="transit peptide" description="Mitochondrion" evidence="1">
    <location>
        <begin position="1"/>
        <end position="22"/>
    </location>
</feature>
<feature type="chain" id="PRO_0000398123" description="Arginine biosynthesis bifunctional protein ArgJ alpha chain" evidence="1">
    <location>
        <begin position="23"/>
        <end position="232"/>
    </location>
</feature>
<feature type="chain" id="PRO_0000398124" description="Arginine biosynthesis bifunctional protein ArgJ beta chain" evidence="1">
    <location>
        <begin position="233"/>
        <end position="464"/>
    </location>
</feature>
<feature type="active site" description="Nucleophile" evidence="1">
    <location>
        <position position="233"/>
    </location>
</feature>
<feature type="binding site" evidence="1">
    <location>
        <position position="193"/>
    </location>
    <ligand>
        <name>substrate</name>
    </ligand>
</feature>
<feature type="binding site" evidence="1">
    <location>
        <position position="222"/>
    </location>
    <ligand>
        <name>substrate</name>
    </ligand>
</feature>
<feature type="binding site" evidence="1">
    <location>
        <position position="233"/>
    </location>
    <ligand>
        <name>substrate</name>
    </ligand>
</feature>
<feature type="binding site" evidence="1">
    <location>
        <position position="320"/>
    </location>
    <ligand>
        <name>substrate</name>
    </ligand>
</feature>
<feature type="binding site" evidence="1">
    <location>
        <position position="459"/>
    </location>
    <ligand>
        <name>substrate</name>
    </ligand>
</feature>
<feature type="binding site" evidence="1">
    <location>
        <position position="464"/>
    </location>
    <ligand>
        <name>substrate</name>
    </ligand>
</feature>
<feature type="site" description="Involved in the stabilization of negative charge on the oxyanion by the formation of the oxyanion hole" evidence="1">
    <location>
        <position position="154"/>
    </location>
</feature>
<feature type="site" description="Involved in the stabilization of negative charge on the oxyanion by the formation of the oxyanion hole" evidence="1">
    <location>
        <position position="155"/>
    </location>
</feature>
<feature type="site" description="Cleavage; by autolysis" evidence="1">
    <location>
        <begin position="232"/>
        <end position="233"/>
    </location>
</feature>
<organism>
    <name type="scientific">Verticillium alfalfae (strain VaMs.102 / ATCC MYA-4576 / FGSC 10136)</name>
    <name type="common">Verticillium wilt of alfalfa</name>
    <name type="synonym">Verticillium albo-atrum</name>
    <dbReference type="NCBI Taxonomy" id="526221"/>
    <lineage>
        <taxon>Eukaryota</taxon>
        <taxon>Fungi</taxon>
        <taxon>Dikarya</taxon>
        <taxon>Ascomycota</taxon>
        <taxon>Pezizomycotina</taxon>
        <taxon>Sordariomycetes</taxon>
        <taxon>Hypocreomycetidae</taxon>
        <taxon>Glomerellales</taxon>
        <taxon>Plectosphaerellaceae</taxon>
        <taxon>Verticillium</taxon>
    </lineage>
</organism>
<evidence type="ECO:0000255" key="1">
    <source>
        <dbReference type="HAMAP-Rule" id="MF_03124"/>
    </source>
</evidence>
<sequence>MAASFKALPQQLTLTRSFARCYSVSAESIPAAKKKYVPTEGSYPQGFQASGILVGVKPGNKTKPDLAFLTSDRPCAAAAVFTKNKFQAAPVTFSRDLLKRRGNRGIRGVLINSGCANAVTGKGGLEDASLMAKAADEQLGGEDGAGSSTIVMSTGVIGQRLPIDKIVGNVGAAHGALGSGHKDWLACATAICTTDTFPKLMSRTFSLPSSPGVEYRMAGMTKGAGMIHPNMATLLGVVATDAPIAPGVMPSVLKHAVDRSFNSITIDGDTSTNDTVALLANGAAGGQEISSVDSPDYAAFQTVLSDFSADLAKLIVRDGEGATKFVTIRVVDSASEEAARKVASTIARSPLVKTALYGRDANWGRILCATGYALISEPGQDINEVASIVSEKTNVSFVPTDGSAELKLLVNGEPETVDEARASEILELEDLEILVKLGTGDKQATYWTCDYSHEYITINGDYRT</sequence>
<protein>
    <recommendedName>
        <fullName evidence="1">Arginine biosynthesis bifunctional protein ArgJ, mitochondrial</fullName>
    </recommendedName>
    <domain>
        <recommendedName>
            <fullName evidence="1">Glutamate N-acetyltransferase</fullName>
            <shortName evidence="1">GAT</shortName>
            <ecNumber evidence="1">2.3.1.35</ecNumber>
        </recommendedName>
        <alternativeName>
            <fullName evidence="1">Ornithine acetyltransferase</fullName>
            <shortName evidence="1">OATase</shortName>
        </alternativeName>
        <alternativeName>
            <fullName evidence="1">Ornithine transacetylase</fullName>
        </alternativeName>
    </domain>
    <domain>
        <recommendedName>
            <fullName evidence="1">Amino-acid acetyltransferase</fullName>
            <ecNumber evidence="1">2.3.1.1</ecNumber>
        </recommendedName>
        <alternativeName>
            <fullName evidence="1">N-acetylglutamate synthase</fullName>
            <shortName evidence="1">AGS</shortName>
        </alternativeName>
    </domain>
    <component>
        <recommendedName>
            <fullName evidence="1">Arginine biosynthesis bifunctional protein ArgJ alpha chain</fullName>
        </recommendedName>
    </component>
    <component>
        <recommendedName>
            <fullName evidence="1">Arginine biosynthesis bifunctional protein ArgJ beta chain</fullName>
        </recommendedName>
    </component>
</protein>